<comment type="function">
    <text evidence="4 5 6 7 9">Exhibits both phospholipase A1/2 and acyltransferase activities (PubMed:19615464, PubMed:22605381, PubMed:22825852, PubMed:26503625). Shows phospholipase A1 (PLA1) and A2 (PLA2), catalyzing the calcium-independent release of fatty acids from the sn-1 or sn-2 position of glycerophospholipids (PubMed:19615464, PubMed:22605381, PubMed:22825852). For most substrates, PLA1 activity is much higher than PLA2 activity (PubMed:19615464). Shows O-acyltransferase activity, catalyzing the transfer of a fatty acyl group from glycerophospholipid to the hydroxyl group of lysophospholipid (PubMed:19615464). Shows N-acyltransferase activity, catalyzing the calcium-independent transfer of a fatty acyl group at the sn-1 position of phosphatidylcholine (PC) and other glycerophospholipids to the primary amine of phosphatidylethanolamine (PE), forming N-acylphosphatidylethanolamine (NAPE), which serves as precursor for N-acylethanolamines (NAEs) (PubMed:19615464, PubMed:22605381, PubMed:22825852). Promotes keratinocyte differentiation via activation of TGM1 (PubMed:17762858).</text>
</comment>
<comment type="catalytic activity">
    <reaction evidence="5 6 7">
        <text>a 1,2-diacyl-sn-glycero-3-phosphocholine + H2O = a 1-acyl-sn-glycero-3-phosphocholine + a fatty acid + H(+)</text>
        <dbReference type="Rhea" id="RHEA:15801"/>
        <dbReference type="ChEBI" id="CHEBI:15377"/>
        <dbReference type="ChEBI" id="CHEBI:15378"/>
        <dbReference type="ChEBI" id="CHEBI:28868"/>
        <dbReference type="ChEBI" id="CHEBI:57643"/>
        <dbReference type="ChEBI" id="CHEBI:58168"/>
        <dbReference type="EC" id="3.1.1.4"/>
    </reaction>
    <physiologicalReaction direction="left-to-right" evidence="5">
        <dbReference type="Rhea" id="RHEA:15802"/>
    </physiologicalReaction>
</comment>
<comment type="catalytic activity">
    <reaction evidence="5 6 7">
        <text>a 1,2-diacyl-sn-glycero-3-phosphocholine + H2O = a 2-acyl-sn-glycero-3-phosphocholine + a fatty acid + H(+)</text>
        <dbReference type="Rhea" id="RHEA:18689"/>
        <dbReference type="ChEBI" id="CHEBI:15377"/>
        <dbReference type="ChEBI" id="CHEBI:15378"/>
        <dbReference type="ChEBI" id="CHEBI:28868"/>
        <dbReference type="ChEBI" id="CHEBI:57643"/>
        <dbReference type="ChEBI" id="CHEBI:57875"/>
        <dbReference type="EC" id="3.1.1.32"/>
    </reaction>
    <physiologicalReaction direction="left-to-right" evidence="5">
        <dbReference type="Rhea" id="RHEA:18690"/>
    </physiologicalReaction>
</comment>
<comment type="catalytic activity">
    <reaction evidence="5">
        <text>1,2-dihexadecanoyl-sn-glycero-3-phosphocholine + H2O = 1-hexadecanoyl-sn-glycero-3-phosphocholine + hexadecanoate + H(+)</text>
        <dbReference type="Rhea" id="RHEA:41223"/>
        <dbReference type="ChEBI" id="CHEBI:7896"/>
        <dbReference type="ChEBI" id="CHEBI:15377"/>
        <dbReference type="ChEBI" id="CHEBI:15378"/>
        <dbReference type="ChEBI" id="CHEBI:72998"/>
        <dbReference type="ChEBI" id="CHEBI:72999"/>
    </reaction>
    <physiologicalReaction direction="left-to-right" evidence="5">
        <dbReference type="Rhea" id="RHEA:41224"/>
    </physiologicalReaction>
</comment>
<comment type="catalytic activity">
    <reaction evidence="5">
        <text>1,2-dihexadecanoyl-sn-glycero-3-phosphocholine + H2O = 2-hexadecanoyl-sn-glycero-3-phosphocholine + hexadecanoate + H(+)</text>
        <dbReference type="Rhea" id="RHEA:40487"/>
        <dbReference type="ChEBI" id="CHEBI:7896"/>
        <dbReference type="ChEBI" id="CHEBI:15377"/>
        <dbReference type="ChEBI" id="CHEBI:15378"/>
        <dbReference type="ChEBI" id="CHEBI:72999"/>
        <dbReference type="ChEBI" id="CHEBI:76078"/>
    </reaction>
    <physiologicalReaction direction="left-to-right" evidence="5">
        <dbReference type="Rhea" id="RHEA:40488"/>
    </physiologicalReaction>
</comment>
<comment type="catalytic activity">
    <reaction evidence="5">
        <text>1-hexadecanoyl-2-(9Z-octadecenoyl)-sn-glycero-3-phosphocholine + H2O = 2-(9Z-octadecenoyl)-sn-glycero-3-phosphocholine + hexadecanoate + H(+)</text>
        <dbReference type="Rhea" id="RHEA:38783"/>
        <dbReference type="ChEBI" id="CHEBI:7896"/>
        <dbReference type="ChEBI" id="CHEBI:15377"/>
        <dbReference type="ChEBI" id="CHEBI:15378"/>
        <dbReference type="ChEBI" id="CHEBI:73001"/>
        <dbReference type="ChEBI" id="CHEBI:76071"/>
    </reaction>
    <physiologicalReaction direction="left-to-right" evidence="5">
        <dbReference type="Rhea" id="RHEA:38784"/>
    </physiologicalReaction>
</comment>
<comment type="catalytic activity">
    <reaction evidence="5">
        <text>1-hexadecanoyl-2-(9Z-octadecenoyl)-sn-glycero-3-phosphocholine + H2O = 1-hexadecanoyl-sn-glycero-3-phosphocholine + (9Z)-octadecenoate + H(+)</text>
        <dbReference type="Rhea" id="RHEA:38779"/>
        <dbReference type="ChEBI" id="CHEBI:15377"/>
        <dbReference type="ChEBI" id="CHEBI:15378"/>
        <dbReference type="ChEBI" id="CHEBI:30823"/>
        <dbReference type="ChEBI" id="CHEBI:72998"/>
        <dbReference type="ChEBI" id="CHEBI:73001"/>
    </reaction>
    <physiologicalReaction direction="left-to-right" evidence="5">
        <dbReference type="Rhea" id="RHEA:38780"/>
    </physiologicalReaction>
</comment>
<comment type="catalytic activity">
    <reaction evidence="5">
        <text>1-hexadecanoyl-2-(5Z,8Z,11Z,14Z-eicosatetraenoyl)-sn-glycero-3-phosphocholine + H2O = 2-(5Z,8Z,11Z,14Z)-eicosatetraenoyl-sn-glycero-3-phosphocholine + hexadecanoate + H(+)</text>
        <dbReference type="Rhea" id="RHEA:40571"/>
        <dbReference type="ChEBI" id="CHEBI:7896"/>
        <dbReference type="ChEBI" id="CHEBI:15377"/>
        <dbReference type="ChEBI" id="CHEBI:15378"/>
        <dbReference type="ChEBI" id="CHEBI:73003"/>
        <dbReference type="ChEBI" id="CHEBI:76079"/>
    </reaction>
    <physiologicalReaction direction="left-to-right" evidence="5">
        <dbReference type="Rhea" id="RHEA:40572"/>
    </physiologicalReaction>
</comment>
<comment type="catalytic activity">
    <reaction evidence="5">
        <text>1-hexadecanoyl-2-(9Z,12Z-octadecadienoyl)-sn-glycero-3-phosphoethanolamine + H2O = 1-hexadecanoyl-sn-glycero-3-phosphoethanolamine + (9Z,12Z)-octadecadienoate + H(+)</text>
        <dbReference type="Rhea" id="RHEA:40815"/>
        <dbReference type="ChEBI" id="CHEBI:15377"/>
        <dbReference type="ChEBI" id="CHEBI:15378"/>
        <dbReference type="ChEBI" id="CHEBI:30245"/>
        <dbReference type="ChEBI" id="CHEBI:73004"/>
        <dbReference type="ChEBI" id="CHEBI:73008"/>
    </reaction>
    <physiologicalReaction direction="left-to-right" evidence="5">
        <dbReference type="Rhea" id="RHEA:40816"/>
    </physiologicalReaction>
</comment>
<comment type="catalytic activity">
    <reaction evidence="5">
        <text>1-hexadecanoyl-2-(9Z,12Z-octadecadienoyl)-sn-glycero-3-phosphoethanolamine + H2O = 2-(9Z,12Z)-octadecadienoyl-sn-glycero-3-phosphoethanolamine + hexadecanoate + H(+)</text>
        <dbReference type="Rhea" id="RHEA:45164"/>
        <dbReference type="ChEBI" id="CHEBI:7896"/>
        <dbReference type="ChEBI" id="CHEBI:15377"/>
        <dbReference type="ChEBI" id="CHEBI:15378"/>
        <dbReference type="ChEBI" id="CHEBI:73008"/>
        <dbReference type="ChEBI" id="CHEBI:76090"/>
    </reaction>
    <physiologicalReaction direction="left-to-right" evidence="5">
        <dbReference type="Rhea" id="RHEA:45165"/>
    </physiologicalReaction>
</comment>
<comment type="catalytic activity">
    <reaction evidence="5">
        <text>1-hexadecanoyl-2-(5Z,8Z,11Z,14Z-eicosatetraenoyl)-sn-glycero-3-phosphoethanolamine + H2O = 2-(5Z,8Z,11Z,14Z)-eicosatetraenoyl-sn-glycero-3-phosphoethanolamine + hexadecanoate + H(+)</text>
        <dbReference type="Rhea" id="RHEA:41348"/>
        <dbReference type="ChEBI" id="CHEBI:7896"/>
        <dbReference type="ChEBI" id="CHEBI:15377"/>
        <dbReference type="ChEBI" id="CHEBI:15378"/>
        <dbReference type="ChEBI" id="CHEBI:73009"/>
        <dbReference type="ChEBI" id="CHEBI:76091"/>
    </reaction>
    <physiologicalReaction direction="left-to-right" evidence="5">
        <dbReference type="Rhea" id="RHEA:41349"/>
    </physiologicalReaction>
</comment>
<comment type="catalytic activity">
    <reaction evidence="6">
        <text>1-hexanoyl-2-acyl-sn-glycero-3-phosphocholine + H2O = hexanoate + a 2-acyl-sn-glycero-3-phosphocholine + H(+)</text>
        <dbReference type="Rhea" id="RHEA:53496"/>
        <dbReference type="ChEBI" id="CHEBI:15377"/>
        <dbReference type="ChEBI" id="CHEBI:15378"/>
        <dbReference type="ChEBI" id="CHEBI:17120"/>
        <dbReference type="ChEBI" id="CHEBI:57875"/>
        <dbReference type="ChEBI" id="CHEBI:137403"/>
    </reaction>
    <physiologicalReaction direction="left-to-right" evidence="6">
        <dbReference type="Rhea" id="RHEA:53497"/>
    </physiologicalReaction>
</comment>
<comment type="catalytic activity">
    <reaction evidence="6">
        <text>1,2-diheptadecanoyl-sn-glycero-3-phosphoethanolamine + 1-(9Z-octadecenoyl)-2-hexadecanoyl-sn-glycero-3-phosphocholine = 1,2-diheptadecanoyl-sn-glycero-3-phospho-N-hexadecanoyl-ethanolamine + 1-(9Z-octadecenoyl)-sn-glycero-3-phosphocholine + H(+)</text>
        <dbReference type="Rhea" id="RHEA:53524"/>
        <dbReference type="ChEBI" id="CHEBI:15378"/>
        <dbReference type="ChEBI" id="CHEBI:28610"/>
        <dbReference type="ChEBI" id="CHEBI:74667"/>
        <dbReference type="ChEBI" id="CHEBI:138218"/>
        <dbReference type="ChEBI" id="CHEBI:138220"/>
    </reaction>
    <physiologicalReaction direction="left-to-right" evidence="6">
        <dbReference type="Rhea" id="RHEA:53525"/>
    </physiologicalReaction>
</comment>
<comment type="catalytic activity">
    <reaction evidence="6">
        <text>1,2-diheptadecanoyl-sn-glycero-3-phosphoethanolamine + 1-(9Z-octadecenoyl)-2-hexadecanoyl-sn-glycero-3-phosphocholine = 1,2-diheptadecanoyl-sn-glycero-3-phospho-N-(9Z-octadecenoyl)-ethanolamine + 2-hexadecanoyl-sn-glycero-3-phosphocholine + H(+)</text>
        <dbReference type="Rhea" id="RHEA:53528"/>
        <dbReference type="ChEBI" id="CHEBI:15378"/>
        <dbReference type="ChEBI" id="CHEBI:74667"/>
        <dbReference type="ChEBI" id="CHEBI:76078"/>
        <dbReference type="ChEBI" id="CHEBI:138218"/>
        <dbReference type="ChEBI" id="CHEBI:138222"/>
    </reaction>
    <physiologicalReaction direction="left-to-right" evidence="6">
        <dbReference type="Rhea" id="RHEA:53529"/>
    </physiologicalReaction>
</comment>
<comment type="biophysicochemical properties">
    <kinetics>
        <KM evidence="5">400 uM for dipalmitoyl-PC</KM>
        <Vmax evidence="5">530.0 nmol/min/mg enzyme with dipalmitoyl-PC as substrate</Vmax>
        <Vmax evidence="5">240.0 nmol/min/mg enzyme with dipalmitoyl-PE as substrate</Vmax>
    </kinetics>
    <phDependence>
        <text evidence="5">Optimum pH is 8.</text>
    </phDependence>
</comment>
<comment type="subunit">
    <text evidence="4">Interacts with TGM1.</text>
</comment>
<comment type="interaction">
    <interactant intactId="EBI-10323452">
        <id>Q9UL19</id>
    </interactant>
    <interactant intactId="EBI-79893">
        <id>Q92569</id>
        <label>PIK3R3</label>
    </interactant>
    <organismsDiffer>false</organismsDiffer>
    <experiments>3</experiments>
</comment>
<comment type="interaction">
    <interactant intactId="EBI-10323452">
        <id>Q9UL19</id>
    </interactant>
    <interactant intactId="EBI-347996">
        <id>O43765</id>
        <label>SGTA</label>
    </interactant>
    <organismsDiffer>false</organismsDiffer>
    <experiments>4</experiments>
</comment>
<comment type="subcellular location">
    <subcellularLocation>
        <location evidence="4">Membrane</location>
        <topology evidence="1">Single-pass membrane protein</topology>
    </subcellularLocation>
</comment>
<comment type="alternative products">
    <event type="alternative splicing"/>
    <isoform>
        <id>Q9UL19-1</id>
        <name>1</name>
        <sequence type="displayed"/>
    </isoform>
    <isoform>
        <id>Q9UL19-2</id>
        <name>2</name>
        <sequence type="described" ref="VSP_041496"/>
    </isoform>
</comment>
<comment type="tissue specificity">
    <text evidence="3 5">Widely expressed.</text>
</comment>
<comment type="induction">
    <text evidence="3">By all-trans-retinoic acid and synthetic retinoids.</text>
</comment>
<comment type="similarity">
    <text evidence="10">Belongs to the H-rev107 family.</text>
</comment>
<comment type="online information" name="Atlas of Genetics and Cytogenetics in Oncology and Haematology">
    <link uri="https://atlasgeneticsoncology.org/gene/42051/RARRES3"/>
</comment>
<accession>Q9UL19</accession>
<accession>B2R599</accession>
<accession>B4DDW2</accession>
<accession>E7ENZ7</accession>
<accession>O95200</accession>
<proteinExistence type="evidence at protein level"/>
<dbReference type="EC" id="2.3.1.-" evidence="5 6 7"/>
<dbReference type="EC" id="3.1.1.32" evidence="5 6 7"/>
<dbReference type="EC" id="3.1.1.4" evidence="5 6 7"/>
<dbReference type="EMBL" id="AF060228">
    <property type="protein sequence ID" value="AAC84000.1"/>
    <property type="molecule type" value="mRNA"/>
</dbReference>
<dbReference type="EMBL" id="AF092922">
    <property type="protein sequence ID" value="AAF02294.1"/>
    <property type="molecule type" value="mRNA"/>
</dbReference>
<dbReference type="EMBL" id="AB453252">
    <property type="protein sequence ID" value="BAH22446.1"/>
    <property type="molecule type" value="mRNA"/>
</dbReference>
<dbReference type="EMBL" id="AB030815">
    <property type="protein sequence ID" value="BAB08109.1"/>
    <property type="molecule type" value="mRNA"/>
</dbReference>
<dbReference type="EMBL" id="AK293357">
    <property type="protein sequence ID" value="BAG56873.1"/>
    <property type="molecule type" value="mRNA"/>
</dbReference>
<dbReference type="EMBL" id="AK312110">
    <property type="protein sequence ID" value="BAG35046.1"/>
    <property type="molecule type" value="mRNA"/>
</dbReference>
<dbReference type="EMBL" id="AP001591">
    <property type="status" value="NOT_ANNOTATED_CDS"/>
    <property type="molecule type" value="Genomic_DNA"/>
</dbReference>
<dbReference type="EMBL" id="CH471076">
    <property type="protein sequence ID" value="EAW74156.1"/>
    <property type="molecule type" value="Genomic_DNA"/>
</dbReference>
<dbReference type="EMBL" id="BC009678">
    <property type="protein sequence ID" value="AAH09678.1"/>
    <property type="molecule type" value="mRNA"/>
</dbReference>
<dbReference type="CCDS" id="CCDS41662.1">
    <molecule id="Q9UL19-1"/>
</dbReference>
<dbReference type="RefSeq" id="NP_004576.2">
    <molecule id="Q9UL19-1"/>
    <property type="nucleotide sequence ID" value="NM_004585.5"/>
</dbReference>
<dbReference type="PDB" id="2LKT">
    <property type="method" value="NMR"/>
    <property type="chains" value="A=1-125"/>
</dbReference>
<dbReference type="PDB" id="2MY9">
    <property type="method" value="NMR"/>
    <property type="chains" value="A=1-125"/>
</dbReference>
<dbReference type="PDB" id="7ZOT">
    <property type="method" value="X-ray"/>
    <property type="resolution" value="1.74 A"/>
    <property type="chains" value="A/B=1-123"/>
</dbReference>
<dbReference type="PDBsum" id="2LKT"/>
<dbReference type="PDBsum" id="2MY9"/>
<dbReference type="PDBsum" id="7ZOT"/>
<dbReference type="BMRB" id="Q9UL19"/>
<dbReference type="SASBDB" id="Q9UL19"/>
<dbReference type="SMR" id="Q9UL19"/>
<dbReference type="BioGRID" id="111855">
    <property type="interactions" value="26"/>
</dbReference>
<dbReference type="FunCoup" id="Q9UL19">
    <property type="interactions" value="37"/>
</dbReference>
<dbReference type="IntAct" id="Q9UL19">
    <property type="interactions" value="14"/>
</dbReference>
<dbReference type="STRING" id="9606.ENSP00000255688"/>
<dbReference type="BindingDB" id="Q9UL19"/>
<dbReference type="ChEMBL" id="CHEMBL4630864"/>
<dbReference type="SwissLipids" id="SLP:000001076"/>
<dbReference type="iPTMnet" id="Q9UL19"/>
<dbReference type="PhosphoSitePlus" id="Q9UL19"/>
<dbReference type="BioMuta" id="RARRES3"/>
<dbReference type="DMDM" id="20140910"/>
<dbReference type="jPOST" id="Q9UL19"/>
<dbReference type="MassIVE" id="Q9UL19"/>
<dbReference type="PaxDb" id="9606-ENSP00000255688"/>
<dbReference type="PeptideAtlas" id="Q9UL19"/>
<dbReference type="ProteomicsDB" id="84932">
    <molecule id="Q9UL19-1"/>
</dbReference>
<dbReference type="ProteomicsDB" id="84933">
    <molecule id="Q9UL19-2"/>
</dbReference>
<dbReference type="Antibodypedia" id="2443">
    <property type="antibodies" value="231 antibodies from 35 providers"/>
</dbReference>
<dbReference type="DNASU" id="5920"/>
<dbReference type="Ensembl" id="ENST00000255688.8">
    <molecule id="Q9UL19-1"/>
    <property type="protein sequence ID" value="ENSP00000255688.3"/>
    <property type="gene ID" value="ENSG00000133321.12"/>
</dbReference>
<dbReference type="Ensembl" id="ENST00000439013.6">
    <molecule id="Q9UL19-2"/>
    <property type="protein sequence ID" value="ENSP00000402943.2"/>
    <property type="gene ID" value="ENSG00000133321.12"/>
</dbReference>
<dbReference type="Ensembl" id="ENST00000718309.1">
    <molecule id="Q9UL19-1"/>
    <property type="protein sequence ID" value="ENSP00000520746.1"/>
    <property type="gene ID" value="ENSG00000133321.12"/>
</dbReference>
<dbReference type="GeneID" id="5920"/>
<dbReference type="KEGG" id="hsa:5920"/>
<dbReference type="MANE-Select" id="ENST00000255688.8">
    <property type="protein sequence ID" value="ENSP00000255688.3"/>
    <property type="RefSeq nucleotide sequence ID" value="NM_004585.5"/>
    <property type="RefSeq protein sequence ID" value="NP_004576.2"/>
</dbReference>
<dbReference type="UCSC" id="uc001nxf.5">
    <molecule id="Q9UL19-1"/>
    <property type="organism name" value="human"/>
</dbReference>
<dbReference type="AGR" id="HGNC:9869"/>
<dbReference type="CTD" id="5920"/>
<dbReference type="DisGeNET" id="5920"/>
<dbReference type="GeneCards" id="PLAAT4"/>
<dbReference type="HGNC" id="HGNC:9869">
    <property type="gene designation" value="PLAAT4"/>
</dbReference>
<dbReference type="HPA" id="ENSG00000133321">
    <property type="expression patterns" value="Low tissue specificity"/>
</dbReference>
<dbReference type="MIM" id="605092">
    <property type="type" value="gene"/>
</dbReference>
<dbReference type="neXtProt" id="NX_Q9UL19"/>
<dbReference type="OpenTargets" id="ENSG00000133321"/>
<dbReference type="VEuPathDB" id="HostDB:ENSG00000133321"/>
<dbReference type="eggNOG" id="ENOG502S0JN">
    <property type="taxonomic scope" value="Eukaryota"/>
</dbReference>
<dbReference type="GeneTree" id="ENSGT00940000162878"/>
<dbReference type="HOGENOM" id="CLU_109418_0_1_1"/>
<dbReference type="InParanoid" id="Q9UL19"/>
<dbReference type="OMA" id="VPECRQV"/>
<dbReference type="OrthoDB" id="421951at2759"/>
<dbReference type="PAN-GO" id="Q9UL19">
    <property type="GO annotations" value="5 GO annotations based on evolutionary models"/>
</dbReference>
<dbReference type="PhylomeDB" id="Q9UL19"/>
<dbReference type="TreeFam" id="TF330836"/>
<dbReference type="BioCyc" id="MetaCyc:ENSG00000133321-MONOMER"/>
<dbReference type="PathwayCommons" id="Q9UL19"/>
<dbReference type="Reactome" id="R-HSA-1482839">
    <property type="pathway name" value="Acyl chain remodelling of PE"/>
</dbReference>
<dbReference type="SignaLink" id="Q9UL19"/>
<dbReference type="BioGRID-ORCS" id="5920">
    <property type="hits" value="17 hits in 1153 CRISPR screens"/>
</dbReference>
<dbReference type="CD-CODE" id="8C2F96ED">
    <property type="entry name" value="Centrosome"/>
</dbReference>
<dbReference type="ChiTaRS" id="RARRES3">
    <property type="organism name" value="human"/>
</dbReference>
<dbReference type="EvolutionaryTrace" id="Q9UL19"/>
<dbReference type="GeneWiki" id="RARRES3"/>
<dbReference type="GenomeRNAi" id="5920"/>
<dbReference type="Pharos" id="Q9UL19">
    <property type="development level" value="Tchem"/>
</dbReference>
<dbReference type="PRO" id="PR:Q9UL19"/>
<dbReference type="Proteomes" id="UP000005640">
    <property type="component" value="Chromosome 11"/>
</dbReference>
<dbReference type="RNAct" id="Q9UL19">
    <property type="molecule type" value="protein"/>
</dbReference>
<dbReference type="Bgee" id="ENSG00000133321">
    <property type="expression patterns" value="Expressed in granulocyte and 198 other cell types or tissues"/>
</dbReference>
<dbReference type="ExpressionAtlas" id="Q9UL19">
    <property type="expression patterns" value="baseline and differential"/>
</dbReference>
<dbReference type="GO" id="GO:0005737">
    <property type="term" value="C:cytoplasm"/>
    <property type="evidence" value="ECO:0000318"/>
    <property type="project" value="GO_Central"/>
</dbReference>
<dbReference type="GO" id="GO:0005829">
    <property type="term" value="C:cytosol"/>
    <property type="evidence" value="ECO:0000304"/>
    <property type="project" value="Reactome"/>
</dbReference>
<dbReference type="GO" id="GO:0016020">
    <property type="term" value="C:membrane"/>
    <property type="evidence" value="ECO:0000314"/>
    <property type="project" value="UniProtKB"/>
</dbReference>
<dbReference type="GO" id="GO:0016746">
    <property type="term" value="F:acyltransferase activity"/>
    <property type="evidence" value="ECO:0000304"/>
    <property type="project" value="Reactome"/>
</dbReference>
<dbReference type="GO" id="GO:0016410">
    <property type="term" value="F:N-acyltransferase activity"/>
    <property type="evidence" value="ECO:0000314"/>
    <property type="project" value="UniProtKB"/>
</dbReference>
<dbReference type="GO" id="GO:0008970">
    <property type="term" value="F:phospholipase A1 activity"/>
    <property type="evidence" value="ECO:0000314"/>
    <property type="project" value="UniProtKB"/>
</dbReference>
<dbReference type="GO" id="GO:0004623">
    <property type="term" value="F:phospholipase A2 activity"/>
    <property type="evidence" value="ECO:0000314"/>
    <property type="project" value="UniProtKB"/>
</dbReference>
<dbReference type="GO" id="GO:0016042">
    <property type="term" value="P:lipid catabolic process"/>
    <property type="evidence" value="ECO:0007669"/>
    <property type="project" value="UniProtKB-KW"/>
</dbReference>
<dbReference type="GO" id="GO:0070292">
    <property type="term" value="P:N-acylphosphatidylethanolamine metabolic process"/>
    <property type="evidence" value="ECO:0000314"/>
    <property type="project" value="UniProtKB"/>
</dbReference>
<dbReference type="GO" id="GO:0008285">
    <property type="term" value="P:negative regulation of cell population proliferation"/>
    <property type="evidence" value="ECO:0000304"/>
    <property type="project" value="ProtInc"/>
</dbReference>
<dbReference type="GO" id="GO:0036152">
    <property type="term" value="P:phosphatidylethanolamine acyl-chain remodeling"/>
    <property type="evidence" value="ECO:0000304"/>
    <property type="project" value="Reactome"/>
</dbReference>
<dbReference type="GO" id="GO:0006644">
    <property type="term" value="P:phospholipid metabolic process"/>
    <property type="evidence" value="ECO:0000314"/>
    <property type="project" value="UniProtKB"/>
</dbReference>
<dbReference type="GO" id="GO:0045618">
    <property type="term" value="P:positive regulation of keratinocyte differentiation"/>
    <property type="evidence" value="ECO:0000315"/>
    <property type="project" value="UniProtKB"/>
</dbReference>
<dbReference type="GO" id="GO:0150074">
    <property type="term" value="P:positive regulation of protein-glutamine gamma-glutamyltransferase activity"/>
    <property type="evidence" value="ECO:0000315"/>
    <property type="project" value="UniProtKB"/>
</dbReference>
<dbReference type="FunFam" id="3.90.1720.10:FF:000002">
    <property type="entry name" value="HRAS like suppressor 2"/>
    <property type="match status" value="1"/>
</dbReference>
<dbReference type="Gene3D" id="3.90.1720.10">
    <property type="entry name" value="endopeptidase domain like (from Nostoc punctiforme)"/>
    <property type="match status" value="1"/>
</dbReference>
<dbReference type="InterPro" id="IPR051496">
    <property type="entry name" value="H-rev107_PLA/AT"/>
</dbReference>
<dbReference type="InterPro" id="IPR007053">
    <property type="entry name" value="LRAT_dom"/>
</dbReference>
<dbReference type="PANTHER" id="PTHR13943">
    <property type="entry name" value="HRAS-LIKE SUPPRESSOR - RELATED"/>
    <property type="match status" value="1"/>
</dbReference>
<dbReference type="PANTHER" id="PTHR13943:SF36">
    <property type="entry name" value="PHOSPHOLIPASE A AND ACYLTRANSFERASE 4"/>
    <property type="match status" value="1"/>
</dbReference>
<dbReference type="Pfam" id="PF04970">
    <property type="entry name" value="LRAT"/>
    <property type="match status" value="1"/>
</dbReference>
<dbReference type="PROSITE" id="PS51934">
    <property type="entry name" value="LRAT"/>
    <property type="match status" value="1"/>
</dbReference>
<keyword id="KW-0002">3D-structure</keyword>
<keyword id="KW-0025">Alternative splicing</keyword>
<keyword id="KW-0378">Hydrolase</keyword>
<keyword id="KW-0442">Lipid degradation</keyword>
<keyword id="KW-0443">Lipid metabolism</keyword>
<keyword id="KW-0472">Membrane</keyword>
<keyword id="KW-1267">Proteomics identification</keyword>
<keyword id="KW-1185">Reference proteome</keyword>
<keyword id="KW-0808">Transferase</keyword>
<keyword id="KW-0812">Transmembrane</keyword>
<keyword id="KW-1133">Transmembrane helix</keyword>
<evidence type="ECO:0000255" key="1"/>
<evidence type="ECO:0000255" key="2">
    <source>
        <dbReference type="PROSITE-ProRule" id="PRU01283"/>
    </source>
</evidence>
<evidence type="ECO:0000269" key="3">
    <source>
    </source>
</evidence>
<evidence type="ECO:0000269" key="4">
    <source>
    </source>
</evidence>
<evidence type="ECO:0000269" key="5">
    <source>
    </source>
</evidence>
<evidence type="ECO:0000269" key="6">
    <source>
    </source>
</evidence>
<evidence type="ECO:0000269" key="7">
    <source>
    </source>
</evidence>
<evidence type="ECO:0000303" key="8">
    <source>
    </source>
</evidence>
<evidence type="ECO:0000303" key="9">
    <source>
    </source>
</evidence>
<evidence type="ECO:0000305" key="10"/>
<evidence type="ECO:0000312" key="11">
    <source>
        <dbReference type="HGNC" id="HGNC:9869"/>
    </source>
</evidence>
<evidence type="ECO:0007829" key="12">
    <source>
        <dbReference type="PDB" id="2LKT"/>
    </source>
</evidence>
<evidence type="ECO:0007829" key="13">
    <source>
        <dbReference type="PDB" id="2MY9"/>
    </source>
</evidence>
<evidence type="ECO:0007829" key="14">
    <source>
        <dbReference type="PDB" id="7ZOT"/>
    </source>
</evidence>
<name>PLAT4_HUMAN</name>
<protein>
    <recommendedName>
        <fullName evidence="11">Phospholipase A and acyltransferase 4</fullName>
        <ecNumber evidence="5 6 7">2.3.1.-</ecNumber>
        <ecNumber evidence="5 6 7">3.1.1.32</ecNumber>
        <ecNumber evidence="5 6 7">3.1.1.4</ecNumber>
    </recommendedName>
    <alternativeName>
        <fullName>HRAS-like suppressor 4</fullName>
        <shortName>HRSL4</shortName>
    </alternativeName>
    <alternativeName>
        <fullName>RAR-responsive protein TIG3</fullName>
    </alternativeName>
    <alternativeName>
        <fullName>Retinoic acid receptor responder protein 3</fullName>
    </alternativeName>
    <alternativeName>
        <fullName>Retinoid-inducible gene 1 protein</fullName>
    </alternativeName>
    <alternativeName>
        <fullName>Tazarotene-induced gene 3 protein</fullName>
    </alternativeName>
</protein>
<organism>
    <name type="scientific">Homo sapiens</name>
    <name type="common">Human</name>
    <dbReference type="NCBI Taxonomy" id="9606"/>
    <lineage>
        <taxon>Eukaryota</taxon>
        <taxon>Metazoa</taxon>
        <taxon>Chordata</taxon>
        <taxon>Craniata</taxon>
        <taxon>Vertebrata</taxon>
        <taxon>Euteleostomi</taxon>
        <taxon>Mammalia</taxon>
        <taxon>Eutheria</taxon>
        <taxon>Euarchontoglires</taxon>
        <taxon>Primates</taxon>
        <taxon>Haplorrhini</taxon>
        <taxon>Catarrhini</taxon>
        <taxon>Hominidae</taxon>
        <taxon>Homo</taxon>
    </lineage>
</organism>
<reference key="1">
    <citation type="journal article" date="1998" name="Proc. Natl. Acad. Sci. U.S.A.">
        <title>Identification and characterization of a retinoid-induced class II tumor suppressor/growth regulatory gene.</title>
        <authorList>
            <person name="DiSepio D."/>
            <person name="Ghosn C."/>
            <person name="Eckert R.L."/>
            <person name="Deucher A."/>
            <person name="Robinson N."/>
            <person name="Duvic M."/>
            <person name="Chandraratna R.A.S."/>
            <person name="Nagpal S."/>
        </authorList>
    </citation>
    <scope>NUCLEOTIDE SEQUENCE [MRNA] (ISOFORM 1)</scope>
    <source>
        <tissue>Keratinocyte</tissue>
    </source>
</reference>
<reference key="2">
    <citation type="journal article" date="2000" name="Mol. Cell. Endocrinol.">
        <title>Cloning and characterization of a novel retinoid-inducible gene 1(RIG1) deriving from human gastric cancer cells.</title>
        <authorList>
            <person name="Huang S.L."/>
            <person name="Shyu R.Y."/>
            <person name="Yeh M.Y."/>
            <person name="Jiang S.Y."/>
        </authorList>
    </citation>
    <scope>NUCLEOTIDE SEQUENCE [MRNA] (ISOFORM 1)</scope>
    <scope>TISSUE SPECIFICITY</scope>
    <scope>INDUCTION</scope>
    <source>
        <tissue>Stomach cancer</tissue>
    </source>
</reference>
<reference key="3">
    <citation type="journal article" date="2009" name="Biochim. Biophys. Acta">
        <title>Characterization of the human tumor suppressors TIG3 and HRASLS2 as phospholipid-metabolizing enzymes.</title>
        <authorList>
            <person name="Uyama T."/>
            <person name="Jin X.H."/>
            <person name="Tsuboi K."/>
            <person name="Tonai T."/>
            <person name="Ueda N."/>
        </authorList>
    </citation>
    <scope>NUCLEOTIDE SEQUENCE [MRNA] (ISOFORM 1)</scope>
    <scope>FUNCTION</scope>
    <scope>CATALYTIC ACTIVITY</scope>
    <scope>TISSUE SPECIFICITY</scope>
    <scope>BIOPHYSICOCHEMICAL PROPERTIES</scope>
    <source>
        <tissue>Testis</tissue>
    </source>
</reference>
<reference key="4">
    <citation type="submission" date="1999-08" db="EMBL/GenBank/DDBJ databases">
        <authorList>
            <person name="Kato S."/>
        </authorList>
    </citation>
    <scope>NUCLEOTIDE SEQUENCE [MRNA] (ISOFORM 1)</scope>
    <source>
        <tissue>Gastric adenocarcinoma</tissue>
    </source>
</reference>
<reference key="5">
    <citation type="journal article" date="2004" name="Nat. Genet.">
        <title>Complete sequencing and characterization of 21,243 full-length human cDNAs.</title>
        <authorList>
            <person name="Ota T."/>
            <person name="Suzuki Y."/>
            <person name="Nishikawa T."/>
            <person name="Otsuki T."/>
            <person name="Sugiyama T."/>
            <person name="Irie R."/>
            <person name="Wakamatsu A."/>
            <person name="Hayashi K."/>
            <person name="Sato H."/>
            <person name="Nagai K."/>
            <person name="Kimura K."/>
            <person name="Makita H."/>
            <person name="Sekine M."/>
            <person name="Obayashi M."/>
            <person name="Nishi T."/>
            <person name="Shibahara T."/>
            <person name="Tanaka T."/>
            <person name="Ishii S."/>
            <person name="Yamamoto J."/>
            <person name="Saito K."/>
            <person name="Kawai Y."/>
            <person name="Isono Y."/>
            <person name="Nakamura Y."/>
            <person name="Nagahari K."/>
            <person name="Murakami K."/>
            <person name="Yasuda T."/>
            <person name="Iwayanagi T."/>
            <person name="Wagatsuma M."/>
            <person name="Shiratori A."/>
            <person name="Sudo H."/>
            <person name="Hosoiri T."/>
            <person name="Kaku Y."/>
            <person name="Kodaira H."/>
            <person name="Kondo H."/>
            <person name="Sugawara M."/>
            <person name="Takahashi M."/>
            <person name="Kanda K."/>
            <person name="Yokoi T."/>
            <person name="Furuya T."/>
            <person name="Kikkawa E."/>
            <person name="Omura Y."/>
            <person name="Abe K."/>
            <person name="Kamihara K."/>
            <person name="Katsuta N."/>
            <person name="Sato K."/>
            <person name="Tanikawa M."/>
            <person name="Yamazaki M."/>
            <person name="Ninomiya K."/>
            <person name="Ishibashi T."/>
            <person name="Yamashita H."/>
            <person name="Murakawa K."/>
            <person name="Fujimori K."/>
            <person name="Tanai H."/>
            <person name="Kimata M."/>
            <person name="Watanabe M."/>
            <person name="Hiraoka S."/>
            <person name="Chiba Y."/>
            <person name="Ishida S."/>
            <person name="Ono Y."/>
            <person name="Takiguchi S."/>
            <person name="Watanabe S."/>
            <person name="Yosida M."/>
            <person name="Hotuta T."/>
            <person name="Kusano J."/>
            <person name="Kanehori K."/>
            <person name="Takahashi-Fujii A."/>
            <person name="Hara H."/>
            <person name="Tanase T.-O."/>
            <person name="Nomura Y."/>
            <person name="Togiya S."/>
            <person name="Komai F."/>
            <person name="Hara R."/>
            <person name="Takeuchi K."/>
            <person name="Arita M."/>
            <person name="Imose N."/>
            <person name="Musashino K."/>
            <person name="Yuuki H."/>
            <person name="Oshima A."/>
            <person name="Sasaki N."/>
            <person name="Aotsuka S."/>
            <person name="Yoshikawa Y."/>
            <person name="Matsunawa H."/>
            <person name="Ichihara T."/>
            <person name="Shiohata N."/>
            <person name="Sano S."/>
            <person name="Moriya S."/>
            <person name="Momiyama H."/>
            <person name="Satoh N."/>
            <person name="Takami S."/>
            <person name="Terashima Y."/>
            <person name="Suzuki O."/>
            <person name="Nakagawa S."/>
            <person name="Senoh A."/>
            <person name="Mizoguchi H."/>
            <person name="Goto Y."/>
            <person name="Shimizu F."/>
            <person name="Wakebe H."/>
            <person name="Hishigaki H."/>
            <person name="Watanabe T."/>
            <person name="Sugiyama A."/>
            <person name="Takemoto M."/>
            <person name="Kawakami B."/>
            <person name="Yamazaki M."/>
            <person name="Watanabe K."/>
            <person name="Kumagai A."/>
            <person name="Itakura S."/>
            <person name="Fukuzumi Y."/>
            <person name="Fujimori Y."/>
            <person name="Komiyama M."/>
            <person name="Tashiro H."/>
            <person name="Tanigami A."/>
            <person name="Fujiwara T."/>
            <person name="Ono T."/>
            <person name="Yamada K."/>
            <person name="Fujii Y."/>
            <person name="Ozaki K."/>
            <person name="Hirao M."/>
            <person name="Ohmori Y."/>
            <person name="Kawabata A."/>
            <person name="Hikiji T."/>
            <person name="Kobatake N."/>
            <person name="Inagaki H."/>
            <person name="Ikema Y."/>
            <person name="Okamoto S."/>
            <person name="Okitani R."/>
            <person name="Kawakami T."/>
            <person name="Noguchi S."/>
            <person name="Itoh T."/>
            <person name="Shigeta K."/>
            <person name="Senba T."/>
            <person name="Matsumura K."/>
            <person name="Nakajima Y."/>
            <person name="Mizuno T."/>
            <person name="Morinaga M."/>
            <person name="Sasaki M."/>
            <person name="Togashi T."/>
            <person name="Oyama M."/>
            <person name="Hata H."/>
            <person name="Watanabe M."/>
            <person name="Komatsu T."/>
            <person name="Mizushima-Sugano J."/>
            <person name="Satoh T."/>
            <person name="Shirai Y."/>
            <person name="Takahashi Y."/>
            <person name="Nakagawa K."/>
            <person name="Okumura K."/>
            <person name="Nagase T."/>
            <person name="Nomura N."/>
            <person name="Kikuchi H."/>
            <person name="Masuho Y."/>
            <person name="Yamashita R."/>
            <person name="Nakai K."/>
            <person name="Yada T."/>
            <person name="Nakamura Y."/>
            <person name="Ohara O."/>
            <person name="Isogai T."/>
            <person name="Sugano S."/>
        </authorList>
    </citation>
    <scope>NUCLEOTIDE SEQUENCE [LARGE SCALE MRNA] (ISOFORMS 1 AND 2)</scope>
    <source>
        <tissue>Spleen</tissue>
        <tissue>Urinary bladder</tissue>
    </source>
</reference>
<reference key="6">
    <citation type="journal article" date="2006" name="Nature">
        <title>Human chromosome 11 DNA sequence and analysis including novel gene identification.</title>
        <authorList>
            <person name="Taylor T.D."/>
            <person name="Noguchi H."/>
            <person name="Totoki Y."/>
            <person name="Toyoda A."/>
            <person name="Kuroki Y."/>
            <person name="Dewar K."/>
            <person name="Lloyd C."/>
            <person name="Itoh T."/>
            <person name="Takeda T."/>
            <person name="Kim D.-W."/>
            <person name="She X."/>
            <person name="Barlow K.F."/>
            <person name="Bloom T."/>
            <person name="Bruford E."/>
            <person name="Chang J.L."/>
            <person name="Cuomo C.A."/>
            <person name="Eichler E."/>
            <person name="FitzGerald M.G."/>
            <person name="Jaffe D.B."/>
            <person name="LaButti K."/>
            <person name="Nicol R."/>
            <person name="Park H.-S."/>
            <person name="Seaman C."/>
            <person name="Sougnez C."/>
            <person name="Yang X."/>
            <person name="Zimmer A.R."/>
            <person name="Zody M.C."/>
            <person name="Birren B.W."/>
            <person name="Nusbaum C."/>
            <person name="Fujiyama A."/>
            <person name="Hattori M."/>
            <person name="Rogers J."/>
            <person name="Lander E.S."/>
            <person name="Sakaki Y."/>
        </authorList>
    </citation>
    <scope>NUCLEOTIDE SEQUENCE [LARGE SCALE GENOMIC DNA]</scope>
</reference>
<reference key="7">
    <citation type="submission" date="2005-07" db="EMBL/GenBank/DDBJ databases">
        <authorList>
            <person name="Mural R.J."/>
            <person name="Istrail S."/>
            <person name="Sutton G.G."/>
            <person name="Florea L."/>
            <person name="Halpern A.L."/>
            <person name="Mobarry C.M."/>
            <person name="Lippert R."/>
            <person name="Walenz B."/>
            <person name="Shatkay H."/>
            <person name="Dew I."/>
            <person name="Miller J.R."/>
            <person name="Flanigan M.J."/>
            <person name="Edwards N.J."/>
            <person name="Bolanos R."/>
            <person name="Fasulo D."/>
            <person name="Halldorsson B.V."/>
            <person name="Hannenhalli S."/>
            <person name="Turner R."/>
            <person name="Yooseph S."/>
            <person name="Lu F."/>
            <person name="Nusskern D.R."/>
            <person name="Shue B.C."/>
            <person name="Zheng X.H."/>
            <person name="Zhong F."/>
            <person name="Delcher A.L."/>
            <person name="Huson D.H."/>
            <person name="Kravitz S.A."/>
            <person name="Mouchard L."/>
            <person name="Reinert K."/>
            <person name="Remington K.A."/>
            <person name="Clark A.G."/>
            <person name="Waterman M.S."/>
            <person name="Eichler E.E."/>
            <person name="Adams M.D."/>
            <person name="Hunkapiller M.W."/>
            <person name="Myers E.W."/>
            <person name="Venter J.C."/>
        </authorList>
    </citation>
    <scope>NUCLEOTIDE SEQUENCE [LARGE SCALE GENOMIC DNA]</scope>
</reference>
<reference key="8">
    <citation type="journal article" date="2004" name="Genome Res.">
        <title>The status, quality, and expansion of the NIH full-length cDNA project: the Mammalian Gene Collection (MGC).</title>
        <authorList>
            <consortium name="The MGC Project Team"/>
        </authorList>
    </citation>
    <scope>NUCLEOTIDE SEQUENCE [LARGE SCALE MRNA] (ISOFORM 1)</scope>
    <source>
        <tissue>Lung</tissue>
    </source>
</reference>
<reference key="9">
    <citation type="journal article" date="2008" name="J. Invest. Dermatol.">
        <title>Localization of the TIG3 transglutaminase interaction domain and demonstration that the amino-terminal region is required for TIG3 function as a keratinocyte differentiation regulator.</title>
        <authorList>
            <person name="Jans R."/>
            <person name="Sturniolo M.T."/>
            <person name="Eckert R.L."/>
        </authorList>
    </citation>
    <scope>FUNCTION</scope>
    <scope>SUBCELLULAR LOCATION</scope>
    <scope>INTERACTION WITH TGM1</scope>
</reference>
<reference key="10">
    <citation type="journal article" date="2012" name="J. Biol. Chem.">
        <title>Structural basis for the acyltransferase activity of lecithin:retinol acyltransferase-like proteins.</title>
        <authorList>
            <person name="Golczak M."/>
            <person name="Kiser P.D."/>
            <person name="Sears A.E."/>
            <person name="Lodowski D.T."/>
            <person name="Blaner W.S."/>
            <person name="Palczewski K."/>
        </authorList>
    </citation>
    <scope>FUNCTION</scope>
    <scope>CATALYTIC ACTIVITY</scope>
</reference>
<reference key="11">
    <citation type="journal article" date="2012" name="J. Biol. Chem.">
        <title>Generation of N-acylphosphatidylethanolamine by members of the phospholipase A/acyltransferase (PLA/AT) family.</title>
        <authorList>
            <person name="Uyama T."/>
            <person name="Ikematsu N."/>
            <person name="Inoue M."/>
            <person name="Shinohara N."/>
            <person name="Jin X.H."/>
            <person name="Tsuboi K."/>
            <person name="Tonai T."/>
            <person name="Tokumura A."/>
            <person name="Ueda N."/>
        </authorList>
    </citation>
    <scope>FUNCTION</scope>
    <scope>CATALYTIC ACTIVITY</scope>
</reference>
<reference key="12">
    <citation type="journal article" date="2015" name="J. Biomed. Sci.">
        <title>The HRASLS (PLA/AT) subfamily of enzymes.</title>
        <authorList>
            <person name="Mardian E.B."/>
            <person name="Bradley R.M."/>
            <person name="Duncan R.E."/>
        </authorList>
    </citation>
    <scope>REVIEW</scope>
</reference>
<gene>
    <name evidence="11" type="primary">PLAAT4</name>
    <name type="synonym">RARRES3</name>
    <name type="synonym">RIG1</name>
    <name type="synonym">TIG3</name>
</gene>
<sequence>MASPHQEPKPGDLIEIFRLGYEHWALYIGDGYVIHLAPPSEYPGAGSSSVFSVLSNSAEVKRERLEDVVGGCCYRVNNSLDHEYQPRPVEVIISSAKEMVGQKMKYSIVSRNCEHFVTQLRYGKSRCKQVEKAKVEVGVATALGILVVAGCSFAIRRYQKKATA</sequence>
<feature type="chain" id="PRO_0000152490" description="Phospholipase A and acyltransferase 4">
    <location>
        <begin position="1"/>
        <end position="164"/>
    </location>
</feature>
<feature type="topological domain" description="Cytoplasmic" evidence="1">
    <location>
        <begin position="1"/>
        <end position="134"/>
    </location>
</feature>
<feature type="transmembrane region" description="Helical" evidence="1">
    <location>
        <begin position="135"/>
        <end position="155"/>
    </location>
</feature>
<feature type="topological domain" description="Lumenal" evidence="1">
    <location>
        <begin position="156"/>
        <end position="164"/>
    </location>
</feature>
<feature type="domain" description="LRAT" evidence="2">
    <location>
        <begin position="13"/>
        <end position="129"/>
    </location>
</feature>
<feature type="region of interest" description="Essential for its ability regulate keratinocyte differentiation" evidence="4">
    <location>
        <begin position="1"/>
        <end position="40"/>
    </location>
</feature>
<feature type="region of interest" description="Interaction with TGM1" evidence="4">
    <location>
        <begin position="124"/>
        <end position="164"/>
    </location>
</feature>
<feature type="active site" evidence="2">
    <location>
        <position position="23"/>
    </location>
</feature>
<feature type="active site" evidence="2">
    <location>
        <position position="35"/>
    </location>
</feature>
<feature type="active site" description="Acyl-thioester intermediate" evidence="2">
    <location>
        <position position="113"/>
    </location>
</feature>
<feature type="splice variant" id="VSP_041496" description="In isoform 2." evidence="8">
    <original>EKAKVEVGVATALGILVVAGCSFAIRRYQKKATA</original>
    <variation>RTSLDNPSPSAWGWTHGAVQPGDHCE</variation>
    <location>
        <begin position="131"/>
        <end position="164"/>
    </location>
</feature>
<feature type="sequence variant" id="VAR_049480" description="In dbSNP:rs35502888.">
    <original>V</original>
    <variation>L</variation>
    <location>
        <position position="69"/>
    </location>
</feature>
<feature type="sequence variant" id="VAR_049481" description="In dbSNP:rs35845275.">
    <original>A</original>
    <variation>V</variation>
    <location>
        <position position="162"/>
    </location>
</feature>
<feature type="sequence conflict" description="In Ref. 5; BAG56873." evidence="10" ref="5">
    <original>G</original>
    <variation>R</variation>
    <location>
        <position position="44"/>
    </location>
</feature>
<feature type="sequence conflict" description="In Ref. 1; AAC84000." evidence="10" ref="1">
    <original>E</original>
    <variation>G</variation>
    <location>
        <position position="63"/>
    </location>
</feature>
<feature type="sequence conflict" description="In Ref. 1; AAC84000." evidence="10" ref="1">
    <original>T</original>
    <variation>A</variation>
    <location>
        <position position="118"/>
    </location>
</feature>
<feature type="strand" evidence="12">
    <location>
        <begin position="3"/>
        <end position="5"/>
    </location>
</feature>
<feature type="strand" evidence="14">
    <location>
        <begin position="13"/>
        <end position="17"/>
    </location>
</feature>
<feature type="strand" evidence="14">
    <location>
        <begin position="19"/>
        <end position="29"/>
    </location>
</feature>
<feature type="strand" evidence="14">
    <location>
        <begin position="32"/>
        <end position="36"/>
    </location>
</feature>
<feature type="helix" evidence="13">
    <location>
        <begin position="42"/>
        <end position="44"/>
    </location>
</feature>
<feature type="strand" evidence="12">
    <location>
        <begin position="50"/>
        <end position="52"/>
    </location>
</feature>
<feature type="turn" evidence="14">
    <location>
        <begin position="53"/>
        <end position="56"/>
    </location>
</feature>
<feature type="strand" evidence="14">
    <location>
        <begin position="57"/>
        <end position="64"/>
    </location>
</feature>
<feature type="helix" evidence="14">
    <location>
        <begin position="65"/>
        <end position="69"/>
    </location>
</feature>
<feature type="strand" evidence="14">
    <location>
        <begin position="74"/>
        <end position="76"/>
    </location>
</feature>
<feature type="helix" evidence="14">
    <location>
        <begin position="79"/>
        <end position="82"/>
    </location>
</feature>
<feature type="helix" evidence="14">
    <location>
        <begin position="89"/>
        <end position="99"/>
    </location>
</feature>
<feature type="strand" evidence="14">
    <location>
        <begin position="103"/>
        <end position="105"/>
    </location>
</feature>
<feature type="turn" evidence="14">
    <location>
        <begin position="108"/>
        <end position="111"/>
    </location>
</feature>
<feature type="helix" evidence="14">
    <location>
        <begin position="112"/>
        <end position="122"/>
    </location>
</feature>